<feature type="chain" id="PRO_0000072032" description="Lid2 complex component snt2">
    <location>
        <begin position="1"/>
        <end position="1117"/>
    </location>
</feature>
<feature type="domain" description="BAH" evidence="3">
    <location>
        <begin position="89"/>
        <end position="208"/>
    </location>
</feature>
<feature type="zinc finger region" description="Phorbol-ester/DAG-type" evidence="2">
    <location>
        <begin position="227"/>
        <end position="282"/>
    </location>
</feature>
<feature type="zinc finger region" description="PHD-type 1" evidence="1">
    <location>
        <begin position="245"/>
        <end position="297"/>
    </location>
</feature>
<feature type="zinc finger region" description="PHD-type 2" evidence="1">
    <location>
        <begin position="798"/>
        <end position="882"/>
    </location>
</feature>
<feature type="zinc finger region" description="C2HC pre-PHD-type" evidence="4">
    <location>
        <begin position="890"/>
        <end position="925"/>
    </location>
</feature>
<feature type="zinc finger region" description="PHD-type 3; degenerate" evidence="4">
    <location>
        <begin position="948"/>
        <end position="1002"/>
    </location>
</feature>
<feature type="region of interest" description="Disordered" evidence="5">
    <location>
        <begin position="361"/>
        <end position="380"/>
    </location>
</feature>
<sequence length="1117" mass="127321">MFDLDKNTNIESNHVKIGNKNTTRRLIIKSSKNSVRIAYAPPEKHFVDVTDRFLLPETETQNLKTRLGIFELEPLPPNGLVCCVLPNGELIQPNDFVLVNSPFPGEPFQIARIISFEKSRPCVSTNLYDSVRLNWYFRPRDIQRHLTDTRLLFASMHSDIYNIGSVQEKCTVKHRSQIENLDEYKSQAKSYYFDRLFDQNINKVFDVVPVTQVKNAPDDVLEDLFKNYDFIVTEYGKGRALLNEPSNCKVCKKWCAFDFSVQCADCKKYYHMDCVVPPLLKKPPHGFGWTCATCSFATQRKKSTFQKENANVDANHATENNLEGQATQKSVSILKGHNKALSNVSLQEDHGKRRNLKSLRSSRNLHQQSRKSLDENKPNSFSNVSKLKRLPWNMRYLDLKSDLTVEKKSDIYPSRARISISPMLPTSSEDNLHPLQPLTTADEEMDLDLKSDERFKVDIPTFFERWPFLKDLPLKGYLFPLCEPNLQSAMLLVPITYSDALLDDYLCSCWNLWKKLRLPVSAFVFLELTITALYETKLSPAAAFEKLKSWMPGFGDPKNCTGKRVDEHKINSLVKEFGVSLQCFVEKLKFEYSLKEIFFSFLSWASSPKGLNTFKKLSDSSLSTTTTDSHGLPTCCYDIGMYDLQKILKLKKTPICRWCHSKRSSEWFVAPPIEESSPKDKSKIVALCQRCGYVWRYYGYPLQQATPSDLRNCDFEPVKKRKADWDHLSNHDNEVKKENNRIRNASSLMENPRVSTKTFDNFTLTHDSTINVKADTVKRARQNNIKNKDDVNFSEDRKKCCALCGIVGTEGLLVCFKCGTCVHERCYVCDDYAENEQMLVSASHLSGRTTRNSASPGIVSGKKSYAKKDQVLSWACLSCRSNDNLGQNNDNHCVLCLQSASHSLMKKTVEGNWVHLICASWTPDVYVPAEESEPVCGIAQLPPNRWEKKCEVCGNSFGVCVSSPNSGLTSHVTCAEKANWYLGFEFVKQDQSPFSMLSNLKSLSFFGNVTEINTNKCMINSWTSLRPVLFGPSEQLPRNFLLRNDIVPNTNNSAWSEYIRNLYPKAYIYLLQYTIAVCKPTIAPTNVACCCSKCNSTMSPFWWPGNICQACHCLRVE</sequence>
<accession>Q10077</accession>
<accession>A0AAN2L375</accession>
<proteinExistence type="predicted"/>
<keyword id="KW-0479">Metal-binding</keyword>
<keyword id="KW-0539">Nucleus</keyword>
<keyword id="KW-1185">Reference proteome</keyword>
<keyword id="KW-0677">Repeat</keyword>
<keyword id="KW-0862">Zinc</keyword>
<keyword id="KW-0863">Zinc-finger</keyword>
<name>SNT2_SCHPO</name>
<gene>
    <name type="primary">snt2</name>
    <name evidence="7" type="ORF">SPAC3H1.12c</name>
</gene>
<dbReference type="EMBL" id="CU329670">
    <property type="protein sequence ID" value="CAK9837789.1"/>
    <property type="molecule type" value="Genomic_DNA"/>
</dbReference>
<dbReference type="PIR" id="T38744">
    <property type="entry name" value="T38744"/>
</dbReference>
<dbReference type="RefSeq" id="NP_593554.1">
    <property type="nucleotide sequence ID" value="NM_001018987.2"/>
</dbReference>
<dbReference type="SMR" id="Q10077"/>
<dbReference type="BioGRID" id="279863">
    <property type="interactions" value="118"/>
</dbReference>
<dbReference type="FunCoup" id="Q10077">
    <property type="interactions" value="225"/>
</dbReference>
<dbReference type="STRING" id="284812.Q10077"/>
<dbReference type="iPTMnet" id="Q10077"/>
<dbReference type="PaxDb" id="4896-SPAC3H1.12c.1"/>
<dbReference type="EnsemblFungi" id="SPAC3H1.12c.1">
    <property type="protein sequence ID" value="SPAC3H1.12c.1:pep"/>
    <property type="gene ID" value="SPAC3H1.12c"/>
</dbReference>
<dbReference type="GeneID" id="2543443"/>
<dbReference type="KEGG" id="spo:2543443"/>
<dbReference type="PomBase" id="SPAC3H1.12c">
    <property type="gene designation" value="snt2"/>
</dbReference>
<dbReference type="VEuPathDB" id="FungiDB:SPAC3H1.12c"/>
<dbReference type="eggNOG" id="KOG0955">
    <property type="taxonomic scope" value="Eukaryota"/>
</dbReference>
<dbReference type="HOGENOM" id="CLU_001514_0_0_1"/>
<dbReference type="InParanoid" id="Q10077"/>
<dbReference type="OMA" id="LSWRKYA"/>
<dbReference type="PhylomeDB" id="Q10077"/>
<dbReference type="PRO" id="PR:Q10077"/>
<dbReference type="Proteomes" id="UP000002485">
    <property type="component" value="Chromosome I"/>
</dbReference>
<dbReference type="GO" id="GO:0000785">
    <property type="term" value="C:chromatin"/>
    <property type="evidence" value="ECO:0007669"/>
    <property type="project" value="UniProtKB-ARBA"/>
</dbReference>
<dbReference type="GO" id="GO:0048189">
    <property type="term" value="C:Lid2 complex"/>
    <property type="evidence" value="ECO:0000314"/>
    <property type="project" value="PomBase"/>
</dbReference>
<dbReference type="GO" id="GO:0072686">
    <property type="term" value="C:mitotic spindle"/>
    <property type="evidence" value="ECO:0007005"/>
    <property type="project" value="PomBase"/>
</dbReference>
<dbReference type="GO" id="GO:0005634">
    <property type="term" value="C:nucleus"/>
    <property type="evidence" value="ECO:0007005"/>
    <property type="project" value="PomBase"/>
</dbReference>
<dbReference type="GO" id="GO:0032991">
    <property type="term" value="C:protein-containing complex"/>
    <property type="evidence" value="ECO:0007669"/>
    <property type="project" value="UniProtKB-ARBA"/>
</dbReference>
<dbReference type="GO" id="GO:0003682">
    <property type="term" value="F:chromatin binding"/>
    <property type="evidence" value="ECO:0007669"/>
    <property type="project" value="InterPro"/>
</dbReference>
<dbReference type="GO" id="GO:0004842">
    <property type="term" value="F:ubiquitin-protein transferase activity"/>
    <property type="evidence" value="ECO:0000318"/>
    <property type="project" value="GO_Central"/>
</dbReference>
<dbReference type="GO" id="GO:0008270">
    <property type="term" value="F:zinc ion binding"/>
    <property type="evidence" value="ECO:0007669"/>
    <property type="project" value="UniProtKB-KW"/>
</dbReference>
<dbReference type="GO" id="GO:0006338">
    <property type="term" value="P:chromatin remodeling"/>
    <property type="evidence" value="ECO:0007669"/>
    <property type="project" value="UniProtKB-ARBA"/>
</dbReference>
<dbReference type="GO" id="GO:0036205">
    <property type="term" value="P:histone catabolic process"/>
    <property type="evidence" value="ECO:0000318"/>
    <property type="project" value="GO_Central"/>
</dbReference>
<dbReference type="CDD" id="cd04710">
    <property type="entry name" value="BAH_fungalPHD"/>
    <property type="match status" value="1"/>
</dbReference>
<dbReference type="CDD" id="cd15571">
    <property type="entry name" value="ePHD"/>
    <property type="match status" value="1"/>
</dbReference>
<dbReference type="CDD" id="cd15497">
    <property type="entry name" value="PHD1_Snt2p_like"/>
    <property type="match status" value="1"/>
</dbReference>
<dbReference type="Gene3D" id="2.30.30.490">
    <property type="match status" value="1"/>
</dbReference>
<dbReference type="Gene3D" id="3.30.40.10">
    <property type="entry name" value="Zinc/RING finger domain, C3HC4 (zinc finger)"/>
    <property type="match status" value="1"/>
</dbReference>
<dbReference type="InterPro" id="IPR001025">
    <property type="entry name" value="BAH_dom"/>
</dbReference>
<dbReference type="InterPro" id="IPR043151">
    <property type="entry name" value="BAH_sf"/>
</dbReference>
<dbReference type="InterPro" id="IPR034732">
    <property type="entry name" value="EPHD"/>
</dbReference>
<dbReference type="InterPro" id="IPR002219">
    <property type="entry name" value="PE/DAG-bd"/>
</dbReference>
<dbReference type="InterPro" id="IPR029617">
    <property type="entry name" value="Snt2"/>
</dbReference>
<dbReference type="InterPro" id="IPR019786">
    <property type="entry name" value="Zinc_finger_PHD-type_CS"/>
</dbReference>
<dbReference type="InterPro" id="IPR011011">
    <property type="entry name" value="Znf_FYVE_PHD"/>
</dbReference>
<dbReference type="InterPro" id="IPR001965">
    <property type="entry name" value="Znf_PHD"/>
</dbReference>
<dbReference type="InterPro" id="IPR019787">
    <property type="entry name" value="Znf_PHD-finger"/>
</dbReference>
<dbReference type="InterPro" id="IPR013083">
    <property type="entry name" value="Znf_RING/FYVE/PHD"/>
</dbReference>
<dbReference type="PANTHER" id="PTHR47672">
    <property type="entry name" value="E3 UBIQUITIN-PROTEIN LIGASE SNT2"/>
    <property type="match status" value="1"/>
</dbReference>
<dbReference type="PANTHER" id="PTHR47672:SF1">
    <property type="entry name" value="E3 UBIQUITIN-PROTEIN LIGASE SNT2"/>
    <property type="match status" value="1"/>
</dbReference>
<dbReference type="Pfam" id="PF01426">
    <property type="entry name" value="BAH"/>
    <property type="match status" value="1"/>
</dbReference>
<dbReference type="Pfam" id="PF00628">
    <property type="entry name" value="PHD"/>
    <property type="match status" value="1"/>
</dbReference>
<dbReference type="Pfam" id="PF13832">
    <property type="entry name" value="zf-HC5HC2H_2"/>
    <property type="match status" value="1"/>
</dbReference>
<dbReference type="SMART" id="SM00439">
    <property type="entry name" value="BAH"/>
    <property type="match status" value="1"/>
</dbReference>
<dbReference type="SMART" id="SM00109">
    <property type="entry name" value="C1"/>
    <property type="match status" value="1"/>
</dbReference>
<dbReference type="SMART" id="SM00249">
    <property type="entry name" value="PHD"/>
    <property type="match status" value="2"/>
</dbReference>
<dbReference type="SUPFAM" id="SSF57903">
    <property type="entry name" value="FYVE/PHD zinc finger"/>
    <property type="match status" value="1"/>
</dbReference>
<dbReference type="PROSITE" id="PS51038">
    <property type="entry name" value="BAH"/>
    <property type="match status" value="1"/>
</dbReference>
<dbReference type="PROSITE" id="PS51805">
    <property type="entry name" value="EPHD"/>
    <property type="match status" value="1"/>
</dbReference>
<dbReference type="PROSITE" id="PS01359">
    <property type="entry name" value="ZF_PHD_1"/>
    <property type="match status" value="1"/>
</dbReference>
<comment type="subunit">
    <text>Component of the Lid2 complex composed of ash2, jmj3, lid2, sdc1 and snt2.</text>
</comment>
<comment type="subcellular location">
    <subcellularLocation>
        <location evidence="6">Nucleus</location>
    </subcellularLocation>
</comment>
<organism>
    <name type="scientific">Schizosaccharomyces pombe (strain 972 / ATCC 24843)</name>
    <name type="common">Fission yeast</name>
    <dbReference type="NCBI Taxonomy" id="284812"/>
    <lineage>
        <taxon>Eukaryota</taxon>
        <taxon>Fungi</taxon>
        <taxon>Dikarya</taxon>
        <taxon>Ascomycota</taxon>
        <taxon>Taphrinomycotina</taxon>
        <taxon>Schizosaccharomycetes</taxon>
        <taxon>Schizosaccharomycetales</taxon>
        <taxon>Schizosaccharomycetaceae</taxon>
        <taxon>Schizosaccharomyces</taxon>
    </lineage>
</organism>
<reference key="1">
    <citation type="journal article" date="2002" name="Nature">
        <title>The genome sequence of Schizosaccharomyces pombe.</title>
        <authorList>
            <person name="Wood V."/>
            <person name="Gwilliam R."/>
            <person name="Rajandream M.A."/>
            <person name="Lyne M.H."/>
            <person name="Lyne R."/>
            <person name="Stewart A."/>
            <person name="Sgouros J.G."/>
            <person name="Peat N."/>
            <person name="Hayles J."/>
            <person name="Baker S.G."/>
            <person name="Basham D."/>
            <person name="Bowman S."/>
            <person name="Brooks K."/>
            <person name="Brown D."/>
            <person name="Brown S."/>
            <person name="Chillingworth T."/>
            <person name="Churcher C.M."/>
            <person name="Collins M."/>
            <person name="Connor R."/>
            <person name="Cronin A."/>
            <person name="Davis P."/>
            <person name="Feltwell T."/>
            <person name="Fraser A."/>
            <person name="Gentles S."/>
            <person name="Goble A."/>
            <person name="Hamlin N."/>
            <person name="Harris D.E."/>
            <person name="Hidalgo J."/>
            <person name="Hodgson G."/>
            <person name="Holroyd S."/>
            <person name="Hornsby T."/>
            <person name="Howarth S."/>
            <person name="Huckle E.J."/>
            <person name="Hunt S."/>
            <person name="Jagels K."/>
            <person name="James K.D."/>
            <person name="Jones L."/>
            <person name="Jones M."/>
            <person name="Leather S."/>
            <person name="McDonald S."/>
            <person name="McLean J."/>
            <person name="Mooney P."/>
            <person name="Moule S."/>
            <person name="Mungall K.L."/>
            <person name="Murphy L.D."/>
            <person name="Niblett D."/>
            <person name="Odell C."/>
            <person name="Oliver K."/>
            <person name="O'Neil S."/>
            <person name="Pearson D."/>
            <person name="Quail M.A."/>
            <person name="Rabbinowitsch E."/>
            <person name="Rutherford K.M."/>
            <person name="Rutter S."/>
            <person name="Saunders D."/>
            <person name="Seeger K."/>
            <person name="Sharp S."/>
            <person name="Skelton J."/>
            <person name="Simmonds M.N."/>
            <person name="Squares R."/>
            <person name="Squares S."/>
            <person name="Stevens K."/>
            <person name="Taylor K."/>
            <person name="Taylor R.G."/>
            <person name="Tivey A."/>
            <person name="Walsh S.V."/>
            <person name="Warren T."/>
            <person name="Whitehead S."/>
            <person name="Woodward J.R."/>
            <person name="Volckaert G."/>
            <person name="Aert R."/>
            <person name="Robben J."/>
            <person name="Grymonprez B."/>
            <person name="Weltjens I."/>
            <person name="Vanstreels E."/>
            <person name="Rieger M."/>
            <person name="Schaefer M."/>
            <person name="Mueller-Auer S."/>
            <person name="Gabel C."/>
            <person name="Fuchs M."/>
            <person name="Duesterhoeft A."/>
            <person name="Fritzc C."/>
            <person name="Holzer E."/>
            <person name="Moestl D."/>
            <person name="Hilbert H."/>
            <person name="Borzym K."/>
            <person name="Langer I."/>
            <person name="Beck A."/>
            <person name="Lehrach H."/>
            <person name="Reinhardt R."/>
            <person name="Pohl T.M."/>
            <person name="Eger P."/>
            <person name="Zimmermann W."/>
            <person name="Wedler H."/>
            <person name="Wambutt R."/>
            <person name="Purnelle B."/>
            <person name="Goffeau A."/>
            <person name="Cadieu E."/>
            <person name="Dreano S."/>
            <person name="Gloux S."/>
            <person name="Lelaure V."/>
            <person name="Mottier S."/>
            <person name="Galibert F."/>
            <person name="Aves S.J."/>
            <person name="Xiang Z."/>
            <person name="Hunt C."/>
            <person name="Moore K."/>
            <person name="Hurst S.M."/>
            <person name="Lucas M."/>
            <person name="Rochet M."/>
            <person name="Gaillardin C."/>
            <person name="Tallada V.A."/>
            <person name="Garzon A."/>
            <person name="Thode G."/>
            <person name="Daga R.R."/>
            <person name="Cruzado L."/>
            <person name="Jimenez J."/>
            <person name="Sanchez M."/>
            <person name="del Rey F."/>
            <person name="Benito J."/>
            <person name="Dominguez A."/>
            <person name="Revuelta J.L."/>
            <person name="Moreno S."/>
            <person name="Armstrong J."/>
            <person name="Forsburg S.L."/>
            <person name="Cerutti L."/>
            <person name="Lowe T."/>
            <person name="McCombie W.R."/>
            <person name="Paulsen I."/>
            <person name="Potashkin J."/>
            <person name="Shpakovski G.V."/>
            <person name="Ussery D."/>
            <person name="Barrell B.G."/>
            <person name="Nurse P."/>
        </authorList>
    </citation>
    <scope>NUCLEOTIDE SEQUENCE [LARGE SCALE GENOMIC DNA]</scope>
    <source>
        <strain>972 / ATCC 24843</strain>
    </source>
</reference>
<reference key="2">
    <citation type="journal article" date="2003" name="J. Biol. Chem.">
        <title>High conservation of the Set1/Rad6 axis of histone 3 lysine 4 methylation in budding and fission yeasts.</title>
        <authorList>
            <person name="Roguev A."/>
            <person name="Schaft D."/>
            <person name="Shevchenko A."/>
            <person name="Aasland R."/>
            <person name="Shevchenko A."/>
            <person name="Stewart A.F."/>
        </authorList>
    </citation>
    <scope>COMPOSITION OF THE LID2 COMPLEX</scope>
</reference>
<reference key="3">
    <citation type="journal article" date="2004" name="Mol. Cell. Proteomics">
        <title>A comparative analysis of an orthologous proteomic environment in the yeasts Saccharomyces cerevisiae and Schizosaccharomyces pombe.</title>
        <authorList>
            <person name="Roguev A."/>
            <person name="Shevchenko A."/>
            <person name="Schaft D."/>
            <person name="Thomas H."/>
            <person name="Stewart A.F."/>
            <person name="Shevchenko A."/>
        </authorList>
    </citation>
    <scope>COMPOSITION OF THE LID2 COMPLEX</scope>
</reference>
<reference key="4">
    <citation type="journal article" date="2006" name="Nat. Biotechnol.">
        <title>ORFeome cloning and global analysis of protein localization in the fission yeast Schizosaccharomyces pombe.</title>
        <authorList>
            <person name="Matsuyama A."/>
            <person name="Arai R."/>
            <person name="Yashiroda Y."/>
            <person name="Shirai A."/>
            <person name="Kamata A."/>
            <person name="Sekido S."/>
            <person name="Kobayashi Y."/>
            <person name="Hashimoto A."/>
            <person name="Hamamoto M."/>
            <person name="Hiraoka Y."/>
            <person name="Horinouchi S."/>
            <person name="Yoshida M."/>
        </authorList>
    </citation>
    <scope>SUBCELLULAR LOCATION [LARGE SCALE ANALYSIS]</scope>
</reference>
<protein>
    <recommendedName>
        <fullName>Lid2 complex component snt2</fullName>
        <shortName>Lid2C component snt2</shortName>
    </recommendedName>
</protein>
<evidence type="ECO:0000255" key="1">
    <source>
        <dbReference type="PROSITE-ProRule" id="PRU00146"/>
    </source>
</evidence>
<evidence type="ECO:0000255" key="2">
    <source>
        <dbReference type="PROSITE-ProRule" id="PRU00226"/>
    </source>
</evidence>
<evidence type="ECO:0000255" key="3">
    <source>
        <dbReference type="PROSITE-ProRule" id="PRU00370"/>
    </source>
</evidence>
<evidence type="ECO:0000255" key="4">
    <source>
        <dbReference type="PROSITE-ProRule" id="PRU01146"/>
    </source>
</evidence>
<evidence type="ECO:0000256" key="5">
    <source>
        <dbReference type="SAM" id="MobiDB-lite"/>
    </source>
</evidence>
<evidence type="ECO:0000269" key="6">
    <source>
    </source>
</evidence>
<evidence type="ECO:0000312" key="7">
    <source>
        <dbReference type="PomBase" id="SPAC3H1.12c"/>
    </source>
</evidence>